<accession>Q0B0Y5</accession>
<feature type="chain" id="PRO_1000019854" description="Serine--tRNA ligase">
    <location>
        <begin position="1"/>
        <end position="427"/>
    </location>
</feature>
<feature type="binding site" evidence="1">
    <location>
        <begin position="230"/>
        <end position="232"/>
    </location>
    <ligand>
        <name>L-serine</name>
        <dbReference type="ChEBI" id="CHEBI:33384"/>
    </ligand>
</feature>
<feature type="binding site" evidence="1">
    <location>
        <begin position="261"/>
        <end position="263"/>
    </location>
    <ligand>
        <name>ATP</name>
        <dbReference type="ChEBI" id="CHEBI:30616"/>
    </ligand>
</feature>
<feature type="binding site" evidence="1">
    <location>
        <position position="284"/>
    </location>
    <ligand>
        <name>L-serine</name>
        <dbReference type="ChEBI" id="CHEBI:33384"/>
    </ligand>
</feature>
<feature type="binding site" evidence="1">
    <location>
        <begin position="348"/>
        <end position="351"/>
    </location>
    <ligand>
        <name>ATP</name>
        <dbReference type="ChEBI" id="CHEBI:30616"/>
    </ligand>
</feature>
<feature type="binding site" evidence="1">
    <location>
        <position position="384"/>
    </location>
    <ligand>
        <name>L-serine</name>
        <dbReference type="ChEBI" id="CHEBI:33384"/>
    </ligand>
</feature>
<gene>
    <name evidence="1" type="primary">serS</name>
    <name type="ordered locus">Swol_0010</name>
</gene>
<dbReference type="EC" id="6.1.1.11" evidence="1"/>
<dbReference type="EMBL" id="CP000448">
    <property type="protein sequence ID" value="ABI67369.1"/>
    <property type="molecule type" value="Genomic_DNA"/>
</dbReference>
<dbReference type="RefSeq" id="WP_011639480.1">
    <property type="nucleotide sequence ID" value="NC_008346.1"/>
</dbReference>
<dbReference type="SMR" id="Q0B0Y5"/>
<dbReference type="STRING" id="335541.Swol_0010"/>
<dbReference type="KEGG" id="swo:Swol_0010"/>
<dbReference type="eggNOG" id="COG0172">
    <property type="taxonomic scope" value="Bacteria"/>
</dbReference>
<dbReference type="HOGENOM" id="CLU_023797_1_1_9"/>
<dbReference type="OrthoDB" id="9804647at2"/>
<dbReference type="UniPathway" id="UPA00906">
    <property type="reaction ID" value="UER00895"/>
</dbReference>
<dbReference type="Proteomes" id="UP000001968">
    <property type="component" value="Chromosome"/>
</dbReference>
<dbReference type="GO" id="GO:0005737">
    <property type="term" value="C:cytoplasm"/>
    <property type="evidence" value="ECO:0007669"/>
    <property type="project" value="UniProtKB-SubCell"/>
</dbReference>
<dbReference type="GO" id="GO:0005524">
    <property type="term" value="F:ATP binding"/>
    <property type="evidence" value="ECO:0007669"/>
    <property type="project" value="UniProtKB-UniRule"/>
</dbReference>
<dbReference type="GO" id="GO:0140096">
    <property type="term" value="F:catalytic activity, acting on a protein"/>
    <property type="evidence" value="ECO:0007669"/>
    <property type="project" value="UniProtKB-ARBA"/>
</dbReference>
<dbReference type="GO" id="GO:0004828">
    <property type="term" value="F:serine-tRNA ligase activity"/>
    <property type="evidence" value="ECO:0007669"/>
    <property type="project" value="UniProtKB-UniRule"/>
</dbReference>
<dbReference type="GO" id="GO:0016740">
    <property type="term" value="F:transferase activity"/>
    <property type="evidence" value="ECO:0007669"/>
    <property type="project" value="UniProtKB-ARBA"/>
</dbReference>
<dbReference type="GO" id="GO:0016260">
    <property type="term" value="P:selenocysteine biosynthetic process"/>
    <property type="evidence" value="ECO:0007669"/>
    <property type="project" value="UniProtKB-UniRule"/>
</dbReference>
<dbReference type="GO" id="GO:0006434">
    <property type="term" value="P:seryl-tRNA aminoacylation"/>
    <property type="evidence" value="ECO:0007669"/>
    <property type="project" value="UniProtKB-UniRule"/>
</dbReference>
<dbReference type="CDD" id="cd00770">
    <property type="entry name" value="SerRS_core"/>
    <property type="match status" value="1"/>
</dbReference>
<dbReference type="Gene3D" id="3.30.930.10">
    <property type="entry name" value="Bira Bifunctional Protein, Domain 2"/>
    <property type="match status" value="1"/>
</dbReference>
<dbReference type="Gene3D" id="1.10.287.40">
    <property type="entry name" value="Serine-tRNA synthetase, tRNA binding domain"/>
    <property type="match status" value="1"/>
</dbReference>
<dbReference type="HAMAP" id="MF_00176">
    <property type="entry name" value="Ser_tRNA_synth_type1"/>
    <property type="match status" value="1"/>
</dbReference>
<dbReference type="InterPro" id="IPR002314">
    <property type="entry name" value="aa-tRNA-synt_IIb"/>
</dbReference>
<dbReference type="InterPro" id="IPR006195">
    <property type="entry name" value="aa-tRNA-synth_II"/>
</dbReference>
<dbReference type="InterPro" id="IPR045864">
    <property type="entry name" value="aa-tRNA-synth_II/BPL/LPL"/>
</dbReference>
<dbReference type="InterPro" id="IPR002317">
    <property type="entry name" value="Ser-tRNA-ligase_type_1"/>
</dbReference>
<dbReference type="InterPro" id="IPR015866">
    <property type="entry name" value="Ser-tRNA-synth_1_N"/>
</dbReference>
<dbReference type="InterPro" id="IPR042103">
    <property type="entry name" value="SerRS_1_N_sf"/>
</dbReference>
<dbReference type="InterPro" id="IPR033729">
    <property type="entry name" value="SerRS_core"/>
</dbReference>
<dbReference type="InterPro" id="IPR010978">
    <property type="entry name" value="tRNA-bd_arm"/>
</dbReference>
<dbReference type="NCBIfam" id="TIGR00414">
    <property type="entry name" value="serS"/>
    <property type="match status" value="1"/>
</dbReference>
<dbReference type="PANTHER" id="PTHR43697:SF1">
    <property type="entry name" value="SERINE--TRNA LIGASE"/>
    <property type="match status" value="1"/>
</dbReference>
<dbReference type="PANTHER" id="PTHR43697">
    <property type="entry name" value="SERYL-TRNA SYNTHETASE"/>
    <property type="match status" value="1"/>
</dbReference>
<dbReference type="Pfam" id="PF02403">
    <property type="entry name" value="Seryl_tRNA_N"/>
    <property type="match status" value="1"/>
</dbReference>
<dbReference type="Pfam" id="PF00587">
    <property type="entry name" value="tRNA-synt_2b"/>
    <property type="match status" value="1"/>
</dbReference>
<dbReference type="PIRSF" id="PIRSF001529">
    <property type="entry name" value="Ser-tRNA-synth_IIa"/>
    <property type="match status" value="1"/>
</dbReference>
<dbReference type="PRINTS" id="PR00981">
    <property type="entry name" value="TRNASYNTHSER"/>
</dbReference>
<dbReference type="SUPFAM" id="SSF55681">
    <property type="entry name" value="Class II aaRS and biotin synthetases"/>
    <property type="match status" value="1"/>
</dbReference>
<dbReference type="SUPFAM" id="SSF46589">
    <property type="entry name" value="tRNA-binding arm"/>
    <property type="match status" value="1"/>
</dbReference>
<dbReference type="PROSITE" id="PS50862">
    <property type="entry name" value="AA_TRNA_LIGASE_II"/>
    <property type="match status" value="1"/>
</dbReference>
<name>SYS_SYNWW</name>
<organism>
    <name type="scientific">Syntrophomonas wolfei subsp. wolfei (strain DSM 2245B / Goettingen)</name>
    <dbReference type="NCBI Taxonomy" id="335541"/>
    <lineage>
        <taxon>Bacteria</taxon>
        <taxon>Bacillati</taxon>
        <taxon>Bacillota</taxon>
        <taxon>Clostridia</taxon>
        <taxon>Eubacteriales</taxon>
        <taxon>Syntrophomonadaceae</taxon>
        <taxon>Syntrophomonas</taxon>
    </lineage>
</organism>
<reference key="1">
    <citation type="journal article" date="2010" name="Environ. Microbiol.">
        <title>The genome of Syntrophomonas wolfei: new insights into syntrophic metabolism and biohydrogen production.</title>
        <authorList>
            <person name="Sieber J.R."/>
            <person name="Sims D.R."/>
            <person name="Han C."/>
            <person name="Kim E."/>
            <person name="Lykidis A."/>
            <person name="Lapidus A.L."/>
            <person name="McDonnald E."/>
            <person name="Rohlin L."/>
            <person name="Culley D.E."/>
            <person name="Gunsalus R."/>
            <person name="McInerney M.J."/>
        </authorList>
    </citation>
    <scope>NUCLEOTIDE SEQUENCE [LARGE SCALE GENOMIC DNA]</scope>
    <source>
        <strain>DSM 2245B / Goettingen</strain>
    </source>
</reference>
<keyword id="KW-0030">Aminoacyl-tRNA synthetase</keyword>
<keyword id="KW-0067">ATP-binding</keyword>
<keyword id="KW-0963">Cytoplasm</keyword>
<keyword id="KW-0436">Ligase</keyword>
<keyword id="KW-0547">Nucleotide-binding</keyword>
<keyword id="KW-0648">Protein biosynthesis</keyword>
<keyword id="KW-1185">Reference proteome</keyword>
<sequence length="427" mass="48658">MLDAKLIKANAALVEQQLEKRGLSGVLKPFLALDEERRKILVQVEERKNFRNNSSQQIGKMKKEGLNPADLMEEVRQAGQQIKELDEELARVEKEIEKILLNIPNLPHESVPVGEDEKSNQEVRRWGEPRQFNFEPQAHWDIGPALDILDFERAAKLSGARFTVYKGAGARLERAVINFYLDIHCGEHGYREILPPFMVIADCMVGTGQLPKFAEDMFKLEGKDMYLIPTAEVPLTNLYREEILEAKDLPFYLTAYTPCFRAEAGSHGRDTRGVIRQHQFNKVELVKLCEPQNSYEELEKLTKDAERVLQLLGLPYRVVVLSTGDMGFSAAKTYDIEVWMPGYQDYREISSCSNCEDFQARRANIRYRPDPKAKLQYVHTLNGSGVAIGRTVAAILENYQQEDGSVIIPEVLRPYMGGLEKINRPEA</sequence>
<proteinExistence type="inferred from homology"/>
<protein>
    <recommendedName>
        <fullName evidence="1">Serine--tRNA ligase</fullName>
        <ecNumber evidence="1">6.1.1.11</ecNumber>
    </recommendedName>
    <alternativeName>
        <fullName evidence="1">Seryl-tRNA synthetase</fullName>
        <shortName evidence="1">SerRS</shortName>
    </alternativeName>
    <alternativeName>
        <fullName evidence="1">Seryl-tRNA(Ser/Sec) synthetase</fullName>
    </alternativeName>
</protein>
<comment type="function">
    <text evidence="1">Catalyzes the attachment of serine to tRNA(Ser). Is also able to aminoacylate tRNA(Sec) with serine, to form the misacylated tRNA L-seryl-tRNA(Sec), which will be further converted into selenocysteinyl-tRNA(Sec).</text>
</comment>
<comment type="catalytic activity">
    <reaction evidence="1">
        <text>tRNA(Ser) + L-serine + ATP = L-seryl-tRNA(Ser) + AMP + diphosphate + H(+)</text>
        <dbReference type="Rhea" id="RHEA:12292"/>
        <dbReference type="Rhea" id="RHEA-COMP:9669"/>
        <dbReference type="Rhea" id="RHEA-COMP:9703"/>
        <dbReference type="ChEBI" id="CHEBI:15378"/>
        <dbReference type="ChEBI" id="CHEBI:30616"/>
        <dbReference type="ChEBI" id="CHEBI:33019"/>
        <dbReference type="ChEBI" id="CHEBI:33384"/>
        <dbReference type="ChEBI" id="CHEBI:78442"/>
        <dbReference type="ChEBI" id="CHEBI:78533"/>
        <dbReference type="ChEBI" id="CHEBI:456215"/>
        <dbReference type="EC" id="6.1.1.11"/>
    </reaction>
</comment>
<comment type="catalytic activity">
    <reaction evidence="1">
        <text>tRNA(Sec) + L-serine + ATP = L-seryl-tRNA(Sec) + AMP + diphosphate + H(+)</text>
        <dbReference type="Rhea" id="RHEA:42580"/>
        <dbReference type="Rhea" id="RHEA-COMP:9742"/>
        <dbReference type="Rhea" id="RHEA-COMP:10128"/>
        <dbReference type="ChEBI" id="CHEBI:15378"/>
        <dbReference type="ChEBI" id="CHEBI:30616"/>
        <dbReference type="ChEBI" id="CHEBI:33019"/>
        <dbReference type="ChEBI" id="CHEBI:33384"/>
        <dbReference type="ChEBI" id="CHEBI:78442"/>
        <dbReference type="ChEBI" id="CHEBI:78533"/>
        <dbReference type="ChEBI" id="CHEBI:456215"/>
        <dbReference type="EC" id="6.1.1.11"/>
    </reaction>
</comment>
<comment type="pathway">
    <text evidence="1">Aminoacyl-tRNA biosynthesis; selenocysteinyl-tRNA(Sec) biosynthesis; L-seryl-tRNA(Sec) from L-serine and tRNA(Sec): step 1/1.</text>
</comment>
<comment type="subunit">
    <text evidence="1">Homodimer. The tRNA molecule binds across the dimer.</text>
</comment>
<comment type="subcellular location">
    <subcellularLocation>
        <location evidence="1">Cytoplasm</location>
    </subcellularLocation>
</comment>
<comment type="domain">
    <text evidence="1">Consists of two distinct domains, a catalytic core and a N-terminal extension that is involved in tRNA binding.</text>
</comment>
<comment type="similarity">
    <text evidence="1">Belongs to the class-II aminoacyl-tRNA synthetase family. Type-1 seryl-tRNA synthetase subfamily.</text>
</comment>
<evidence type="ECO:0000255" key="1">
    <source>
        <dbReference type="HAMAP-Rule" id="MF_00176"/>
    </source>
</evidence>